<evidence type="ECO:0000255" key="1"/>
<evidence type="ECO:0000269" key="2">
    <source>
    </source>
</evidence>
<evidence type="ECO:0000269" key="3">
    <source>
    </source>
</evidence>
<evidence type="ECO:0000269" key="4">
    <source>
    </source>
</evidence>
<evidence type="ECO:0000269" key="5">
    <source>
    </source>
</evidence>
<evidence type="ECO:0000303" key="6">
    <source>
    </source>
</evidence>
<evidence type="ECO:0000303" key="7">
    <source>
    </source>
</evidence>
<evidence type="ECO:0000305" key="8"/>
<evidence type="ECO:0000312" key="9">
    <source>
        <dbReference type="Araport" id="AT5G11800"/>
    </source>
</evidence>
<evidence type="ECO:0000312" key="10">
    <source>
        <dbReference type="EMBL" id="CAB87698.1"/>
    </source>
</evidence>
<keyword id="KW-0050">Antiport</keyword>
<keyword id="KW-0333">Golgi apparatus</keyword>
<keyword id="KW-0406">Ion transport</keyword>
<keyword id="KW-0472">Membrane</keyword>
<keyword id="KW-0630">Potassium</keyword>
<keyword id="KW-0633">Potassium transport</keyword>
<keyword id="KW-1185">Reference proteome</keyword>
<keyword id="KW-0732">Signal</keyword>
<keyword id="KW-0812">Transmembrane</keyword>
<keyword id="KW-1133">Transmembrane helix</keyword>
<keyword id="KW-0813">Transport</keyword>
<organism>
    <name type="scientific">Arabidopsis thaliana</name>
    <name type="common">Mouse-ear cress</name>
    <dbReference type="NCBI Taxonomy" id="3702"/>
    <lineage>
        <taxon>Eukaryota</taxon>
        <taxon>Viridiplantae</taxon>
        <taxon>Streptophyta</taxon>
        <taxon>Embryophyta</taxon>
        <taxon>Tracheophyta</taxon>
        <taxon>Spermatophyta</taxon>
        <taxon>Magnoliopsida</taxon>
        <taxon>eudicotyledons</taxon>
        <taxon>Gunneridae</taxon>
        <taxon>Pentapetalae</taxon>
        <taxon>rosids</taxon>
        <taxon>malvids</taxon>
        <taxon>Brassicales</taxon>
        <taxon>Brassicaceae</taxon>
        <taxon>Camelineae</taxon>
        <taxon>Arabidopsis</taxon>
    </lineage>
</organism>
<reference key="1">
    <citation type="journal article" date="2000" name="Nature">
        <title>Sequence and analysis of chromosome 5 of the plant Arabidopsis thaliana.</title>
        <authorList>
            <person name="Tabata S."/>
            <person name="Kaneko T."/>
            <person name="Nakamura Y."/>
            <person name="Kotani H."/>
            <person name="Kato T."/>
            <person name="Asamizu E."/>
            <person name="Miyajima N."/>
            <person name="Sasamoto S."/>
            <person name="Kimura T."/>
            <person name="Hosouchi T."/>
            <person name="Kawashima K."/>
            <person name="Kohara M."/>
            <person name="Matsumoto M."/>
            <person name="Matsuno A."/>
            <person name="Muraki A."/>
            <person name="Nakayama S."/>
            <person name="Nakazaki N."/>
            <person name="Naruo K."/>
            <person name="Okumura S."/>
            <person name="Shinpo S."/>
            <person name="Takeuchi C."/>
            <person name="Wada T."/>
            <person name="Watanabe A."/>
            <person name="Yamada M."/>
            <person name="Yasuda M."/>
            <person name="Sato S."/>
            <person name="de la Bastide M."/>
            <person name="Huang E."/>
            <person name="Spiegel L."/>
            <person name="Gnoj L."/>
            <person name="O'Shaughnessy A."/>
            <person name="Preston R."/>
            <person name="Habermann K."/>
            <person name="Murray J."/>
            <person name="Johnson D."/>
            <person name="Rohlfing T."/>
            <person name="Nelson J."/>
            <person name="Stoneking T."/>
            <person name="Pepin K."/>
            <person name="Spieth J."/>
            <person name="Sekhon M."/>
            <person name="Armstrong J."/>
            <person name="Becker M."/>
            <person name="Belter E."/>
            <person name="Cordum H."/>
            <person name="Cordes M."/>
            <person name="Courtney L."/>
            <person name="Courtney W."/>
            <person name="Dante M."/>
            <person name="Du H."/>
            <person name="Edwards J."/>
            <person name="Fryman J."/>
            <person name="Haakensen B."/>
            <person name="Lamar E."/>
            <person name="Latreille P."/>
            <person name="Leonard S."/>
            <person name="Meyer R."/>
            <person name="Mulvaney E."/>
            <person name="Ozersky P."/>
            <person name="Riley A."/>
            <person name="Strowmatt C."/>
            <person name="Wagner-McPherson C."/>
            <person name="Wollam A."/>
            <person name="Yoakum M."/>
            <person name="Bell M."/>
            <person name="Dedhia N."/>
            <person name="Parnell L."/>
            <person name="Shah R."/>
            <person name="Rodriguez M."/>
            <person name="Hoon See L."/>
            <person name="Vil D."/>
            <person name="Baker J."/>
            <person name="Kirchoff K."/>
            <person name="Toth K."/>
            <person name="King L."/>
            <person name="Bahret A."/>
            <person name="Miller B."/>
            <person name="Marra M.A."/>
            <person name="Martienssen R."/>
            <person name="McCombie W.R."/>
            <person name="Wilson R.K."/>
            <person name="Murphy G."/>
            <person name="Bancroft I."/>
            <person name="Volckaert G."/>
            <person name="Wambutt R."/>
            <person name="Duesterhoeft A."/>
            <person name="Stiekema W."/>
            <person name="Pohl T."/>
            <person name="Entian K.-D."/>
            <person name="Terryn N."/>
            <person name="Hartley N."/>
            <person name="Bent E."/>
            <person name="Johnson S."/>
            <person name="Langham S.-A."/>
            <person name="McCullagh B."/>
            <person name="Robben J."/>
            <person name="Grymonprez B."/>
            <person name="Zimmermann W."/>
            <person name="Ramsperger U."/>
            <person name="Wedler H."/>
            <person name="Balke K."/>
            <person name="Wedler E."/>
            <person name="Peters S."/>
            <person name="van Staveren M."/>
            <person name="Dirkse W."/>
            <person name="Mooijman P."/>
            <person name="Klein Lankhorst R."/>
            <person name="Weitzenegger T."/>
            <person name="Bothe G."/>
            <person name="Rose M."/>
            <person name="Hauf J."/>
            <person name="Berneiser S."/>
            <person name="Hempel S."/>
            <person name="Feldpausch M."/>
            <person name="Lamberth S."/>
            <person name="Villarroel R."/>
            <person name="Gielen J."/>
            <person name="Ardiles W."/>
            <person name="Bents O."/>
            <person name="Lemcke K."/>
            <person name="Kolesov G."/>
            <person name="Mayer K.F.X."/>
            <person name="Rudd S."/>
            <person name="Schoof H."/>
            <person name="Schueller C."/>
            <person name="Zaccaria P."/>
            <person name="Mewes H.-W."/>
            <person name="Bevan M."/>
            <person name="Fransz P.F."/>
        </authorList>
    </citation>
    <scope>NUCLEOTIDE SEQUENCE [LARGE SCALE GENOMIC DNA]</scope>
    <source>
        <strain>cv. Columbia</strain>
    </source>
</reference>
<reference key="2">
    <citation type="journal article" date="2017" name="Plant J.">
        <title>Araport11: a complete reannotation of the Arabidopsis thaliana reference genome.</title>
        <authorList>
            <person name="Cheng C.Y."/>
            <person name="Krishnakumar V."/>
            <person name="Chan A.P."/>
            <person name="Thibaud-Nissen F."/>
            <person name="Schobel S."/>
            <person name="Town C.D."/>
        </authorList>
    </citation>
    <scope>GENOME REANNOTATION</scope>
    <source>
        <strain>cv. Columbia</strain>
    </source>
</reference>
<reference key="3">
    <citation type="submission" date="2008-10" db="EMBL/GenBank/DDBJ databases">
        <title>Arabidopsis ORF clones.</title>
        <authorList>
            <person name="De Los Reyes C."/>
            <person name="Quan R."/>
            <person name="Chen H."/>
            <person name="Bautista V.R."/>
            <person name="Kim C.J."/>
            <person name="Ecker J.R."/>
        </authorList>
    </citation>
    <scope>NUCLEOTIDE SEQUENCE [LARGE SCALE MRNA]</scope>
    <source>
        <strain>cv. Columbia</strain>
    </source>
</reference>
<reference key="4">
    <citation type="journal article" date="2001" name="Plant Physiol.">
        <title>Phylogenetic relationships within cation transporter families of Arabidopsis.</title>
        <authorList>
            <person name="Maeser P."/>
            <person name="Thomine S."/>
            <person name="Schroeder J.I."/>
            <person name="Ward J.M."/>
            <person name="Hirschi K."/>
            <person name="Sze H."/>
            <person name="Talke I.N."/>
            <person name="Amtmann A."/>
            <person name="Maathuis F.J.M."/>
            <person name="Sanders D."/>
            <person name="Harper J.F."/>
            <person name="Tchieu J."/>
            <person name="Gribskov M."/>
            <person name="Persans M.W."/>
            <person name="Salt D.E."/>
            <person name="Kim S.A."/>
            <person name="Guerinot M.L."/>
        </authorList>
    </citation>
    <scope>GENE FAMILY</scope>
    <scope>NOMENCLATURE</scope>
</reference>
<reference key="5">
    <citation type="journal article" date="2013" name="PLoS ONE">
        <title>A novel AtKEA gene family, homolog of bacterial K+/H+ antiporters, plays potential roles in K+ homeostasis and osmotic adjustment in Arabidopsis.</title>
        <authorList>
            <person name="Zheng S."/>
            <person name="Pan T."/>
            <person name="Fan L."/>
            <person name="Qiu Q.S."/>
        </authorList>
    </citation>
    <scope>FUNCTION</scope>
    <scope>GENE FAMILY</scope>
    <scope>TISSUE SPECIFICITY</scope>
    <scope>INDUCTION</scope>
    <scope>TRANSPORTER ACTIVITY</scope>
    <scope>BIOPHYSICOCHEMICAL PROPERTIES</scope>
</reference>
<reference key="6">
    <citation type="journal article" date="2018" name="Plant Physiol.">
        <title>K+ efflux antiporters 4, 5, and 6 mediate pH and K+ homeostasis in endomembrane compartments.</title>
        <authorList>
            <person name="Zhu X."/>
            <person name="Pan T."/>
            <person name="Zhang X."/>
            <person name="Fan L."/>
            <person name="Quintero F.J."/>
            <person name="Zhao H."/>
            <person name="Su X."/>
            <person name="Li X."/>
            <person name="Villalta I."/>
            <person name="Mendoza I."/>
            <person name="Shen J."/>
            <person name="Jiang L."/>
            <person name="Pardo J.M."/>
            <person name="Qiu Q.-S."/>
        </authorList>
    </citation>
    <scope>FUNCTION</scope>
    <scope>DISRUPTION PHENOTYPE</scope>
    <scope>TRANSPORTER ACTIVITY</scope>
    <scope>TISSUE SPECIFICITY</scope>
    <scope>DEVELOPMENTAL STAGE</scope>
    <scope>SUBCELLULAR LOCATION</scope>
    <source>
        <strain>cv. Columbia</strain>
    </source>
</reference>
<reference key="7">
    <citation type="journal article" date="2019" name="Plant Cell Environ.">
        <title>Golgi-localized cation/proton exchangers regulate ionic homeostasis and skotomorphogenesis in Arabidopsis.</title>
        <authorList>
            <person name="Wang Y."/>
            <person name="Tang R.-J."/>
            <person name="Yang X."/>
            <person name="Zheng X."/>
            <person name="Shao Q."/>
            <person name="Tang Q.-L."/>
            <person name="Fu A."/>
            <person name="Luan S."/>
        </authorList>
    </citation>
    <scope>FUNCTION</scope>
    <scope>DISRUPTION PHENOTYPE</scope>
    <scope>SUBCELLULAR LOCATION</scope>
    <scope>TISSUE SPECIFICITY</scope>
    <source>
        <strain>cv. Columbia</strain>
    </source>
</reference>
<reference key="8">
    <citation type="journal article" date="2019" name="Sci. Rep.">
        <title>Evidence for potassium transport activity of Arabidopsis KEA1-KEA6.</title>
        <authorList>
            <person name="Tsujii M."/>
            <person name="Kera K."/>
            <person name="Hamamoto S."/>
            <person name="Kuromori T."/>
            <person name="Shikanai T."/>
            <person name="Uozumi N."/>
        </authorList>
    </citation>
    <scope>FUNCTION</scope>
    <scope>TRANSPORTER ACTIVITY</scope>
    <scope>GENE FAMILY</scope>
    <scope>NOMENCLATURE</scope>
    <source>
        <strain>cv. Columbia</strain>
    </source>
</reference>
<comment type="function">
    <text evidence="2 3 4 5">Electroneutral K(+)/H(+) efflux antiporter involved in K(+) homeostasis and osmotic adjustment (PubMed:24278440, PubMed:30255504, PubMed:30309966, PubMed:31296940). Together with KEA4 and KEA5, promotes growth and development, and facilitates endosomal pH and ions homeostasis, as well as salt tolerance (e.g. K(+), NaCl and LiCl), probably by supporting cell wall biosynthesis during rapid etiolated seedling growth (PubMed:30255504, PubMed:30309966).</text>
</comment>
<comment type="catalytic activity">
    <reaction evidence="2 4 5">
        <text>K(+)(in) + H(+)(out) = K(+)(out) + H(+)(in)</text>
        <dbReference type="Rhea" id="RHEA:29467"/>
        <dbReference type="ChEBI" id="CHEBI:15378"/>
        <dbReference type="ChEBI" id="CHEBI:29103"/>
    </reaction>
</comment>
<comment type="biophysicochemical properties">
    <phDependence>
        <text evidence="2">Optimum pH is 5.8.</text>
    </phDependence>
</comment>
<comment type="subcellular location">
    <subcellularLocation>
        <location evidence="3 4">Golgi apparatus membrane</location>
        <topology evidence="1">Multi-pass membrane protein</topology>
    </subcellularLocation>
    <subcellularLocation>
        <location evidence="4">Golgi apparatus</location>
        <location evidence="4">trans-Golgi network membrane</location>
        <topology evidence="1">Multi-pass membrane protein</topology>
    </subcellularLocation>
    <subcellularLocation>
        <location evidence="4">Prevacuolar compartment membrane</location>
        <topology evidence="1">Multi-pass membrane protein</topology>
    </subcellularLocation>
    <subcellularLocation>
        <location evidence="4">Endomembrane system</location>
        <topology evidence="1">Multi-pass membrane protein</topology>
    </subcellularLocation>
</comment>
<comment type="tissue specificity">
    <text evidence="2 3 4">Expressed in roots, stems, leaves, flowers and silique.</text>
</comment>
<comment type="developmental stage">
    <text evidence="4">In roots, expressed in all cell types, including root hairs (PubMed:30309966). Also observed in the vascular bundles and tips of cotyledons, the base of true leaves, the ovarian stigma and pollen grains within the anthers, and the tip and base of the siliques (PubMed:30309966).</text>
</comment>
<comment type="induction">
    <text evidence="2">Down-regulated by high K(+).</text>
</comment>
<comment type="disruption phenotype">
    <text evidence="3 4">No visible phenotype (PubMed:30255504, PubMed:30309966). The triple mutant kea4 kea5 kea6 is compromised in cell wall biosynthesis and has small rosettes, short seedlings, and is sensitive to low potassium K(+) availability and to high salinity (e.g. K(+), NaCl and LiCl); it also exhibits a reduced luminal pH in the Golgi, trans-Golgi network, prevacuolar compartment and vacuole (PubMed:30255504, PubMed:30309966). These phenotypes are partially suppressed by the cell wall-derived pectin homogalacturonan trigalacturonic GalA(3) in the dark but not in light conditions (PubMed:30255504).</text>
</comment>
<comment type="similarity">
    <text evidence="8">Belongs to the monovalent cation:proton antiporter 2 (CPA2) transporter (TC 2.A.37) family. KEA (TC 2.A.37.1) subfamily.</text>
</comment>
<comment type="sequence caution" evidence="8">
    <conflict type="erroneous gene model prediction">
        <sequence resource="EMBL-CDS" id="CAB87698"/>
    </conflict>
</comment>
<accession>B5X0N6</accession>
<accession>Q9LYF1</accession>
<proteinExistence type="evidence at protein level"/>
<protein>
    <recommendedName>
        <fullName evidence="6">K(+) efflux antiporter 6</fullName>
        <shortName evidence="6">AtKEA6</shortName>
    </recommendedName>
</protein>
<sequence>MVEGRRRRRFSLSSQQLALLLLLLSFFLCFSVASPRAISDSDLLDETVANSSSSVASLNASSSSSLVKPKEGSFADIIDRALEKEFNESDQNEVADPGSFNNSVAGQQAVLETVARVKSTKKNETKEEKRFQLHDVFNLNNDNRAEDTPTLIDRKDNVFIISNSKSKYPVLQLDLRLISDLVVVIVSATCGGIAFACAGQPVITGYLLAGSIIGPGGLNFISEMVQVETVAQFGVVFLLFALGLEFSTAKLKVVRSVAVLGGLLQILLFMFLCGITVSLCGGKRSEGVFVGAFLSMSSTAVVLKFLMEKNSTNSLHGQVTIGILILQDCAVGLLFALLPVLEGNSGIVHGMLSIGKVVVLLLSFLAVLSILSRTCIPWLLKLMVSLSSQTNELYQLAAVAFCLLVAWCSDKLGLSLELGSFAAGVMISTTDLAEHTLEQIEPIRNLFAALFLASIGMLVNVHFLWTHVDILLASVILVIIIKTTIVTTVVKGFGYNNKTALLVGISLAQIGEFAFVLLSRASNLHLIEGKLYLLLLGTTALSLVTTPLVFKMIPAVVHLGILLKWFSPDSTIEKGEIVRSESGKQRMILMSRQSHSS</sequence>
<feature type="signal peptide" evidence="1">
    <location>
        <begin position="1"/>
        <end position="35"/>
    </location>
</feature>
<feature type="chain" id="PRO_0000395102" description="K(+) efflux antiporter 6" evidence="1">
    <location>
        <begin position="36"/>
        <end position="597"/>
    </location>
</feature>
<feature type="transmembrane region" description="Helical" evidence="1">
    <location>
        <begin position="177"/>
        <end position="197"/>
    </location>
</feature>
<feature type="transmembrane region" description="Helical" evidence="1">
    <location>
        <begin position="201"/>
        <end position="221"/>
    </location>
</feature>
<feature type="transmembrane region" description="Helical" evidence="1">
    <location>
        <begin position="224"/>
        <end position="244"/>
    </location>
</feature>
<feature type="transmembrane region" description="Helical" evidence="1">
    <location>
        <begin position="257"/>
        <end position="277"/>
    </location>
</feature>
<feature type="transmembrane region" description="Helical" evidence="1">
    <location>
        <begin position="287"/>
        <end position="307"/>
    </location>
</feature>
<feature type="transmembrane region" description="Helical" evidence="1">
    <location>
        <begin position="321"/>
        <end position="341"/>
    </location>
</feature>
<feature type="transmembrane region" description="Helical" evidence="1">
    <location>
        <begin position="351"/>
        <end position="371"/>
    </location>
</feature>
<feature type="transmembrane region" description="Helical" evidence="1">
    <location>
        <begin position="396"/>
        <end position="416"/>
    </location>
</feature>
<feature type="transmembrane region" description="Helical" evidence="1">
    <location>
        <begin position="440"/>
        <end position="460"/>
    </location>
</feature>
<feature type="transmembrane region" description="Helical" evidence="1">
    <location>
        <begin position="461"/>
        <end position="481"/>
    </location>
</feature>
<feature type="transmembrane region" description="Helical" evidence="1">
    <location>
        <begin position="499"/>
        <end position="519"/>
    </location>
</feature>
<feature type="transmembrane region" description="Helical" evidence="1">
    <location>
        <begin position="543"/>
        <end position="563"/>
    </location>
</feature>
<gene>
    <name evidence="6 7" type="primary">KEA6</name>
    <name evidence="9" type="ordered locus">At5g11800</name>
    <name evidence="10" type="ORF">T22P22.190</name>
</gene>
<dbReference type="EMBL" id="AL163814">
    <property type="protein sequence ID" value="CAB87698.1"/>
    <property type="status" value="ALT_SEQ"/>
    <property type="molecule type" value="Genomic_DNA"/>
</dbReference>
<dbReference type="EMBL" id="CP002688">
    <property type="protein sequence ID" value="AED91722.1"/>
    <property type="molecule type" value="Genomic_DNA"/>
</dbReference>
<dbReference type="EMBL" id="BT044605">
    <property type="protein sequence ID" value="ACI31305.1"/>
    <property type="molecule type" value="mRNA"/>
</dbReference>
<dbReference type="PIR" id="T48539">
    <property type="entry name" value="T48539"/>
</dbReference>
<dbReference type="RefSeq" id="NP_196741.2">
    <property type="nucleotide sequence ID" value="NM_121218.5"/>
</dbReference>
<dbReference type="SMR" id="B5X0N6"/>
<dbReference type="BioGRID" id="16331">
    <property type="interactions" value="9"/>
</dbReference>
<dbReference type="FunCoup" id="B5X0N6">
    <property type="interactions" value="1885"/>
</dbReference>
<dbReference type="IntAct" id="B5X0N6">
    <property type="interactions" value="9"/>
</dbReference>
<dbReference type="STRING" id="3702.B5X0N6"/>
<dbReference type="PaxDb" id="3702-AT5G11800.1"/>
<dbReference type="ProteomicsDB" id="250686"/>
<dbReference type="EnsemblPlants" id="AT5G11800.1">
    <property type="protein sequence ID" value="AT5G11800.1"/>
    <property type="gene ID" value="AT5G11800"/>
</dbReference>
<dbReference type="GeneID" id="831053"/>
<dbReference type="Gramene" id="AT5G11800.1">
    <property type="protein sequence ID" value="AT5G11800.1"/>
    <property type="gene ID" value="AT5G11800"/>
</dbReference>
<dbReference type="KEGG" id="ath:AT5G11800"/>
<dbReference type="Araport" id="AT5G11800"/>
<dbReference type="TAIR" id="AT5G11800">
    <property type="gene designation" value="KEA6"/>
</dbReference>
<dbReference type="eggNOG" id="KOG1650">
    <property type="taxonomic scope" value="Eukaryota"/>
</dbReference>
<dbReference type="HOGENOM" id="CLU_005126_11_1_1"/>
<dbReference type="InParanoid" id="B5X0N6"/>
<dbReference type="OMA" id="FIIGPHT"/>
<dbReference type="OrthoDB" id="1654420at2759"/>
<dbReference type="PhylomeDB" id="B5X0N6"/>
<dbReference type="PRO" id="PR:B5X0N6"/>
<dbReference type="Proteomes" id="UP000006548">
    <property type="component" value="Chromosome 5"/>
</dbReference>
<dbReference type="ExpressionAtlas" id="B5X0N6">
    <property type="expression patterns" value="baseline and differential"/>
</dbReference>
<dbReference type="GO" id="GO:0000139">
    <property type="term" value="C:Golgi membrane"/>
    <property type="evidence" value="ECO:0007669"/>
    <property type="project" value="UniProtKB-SubCell"/>
</dbReference>
<dbReference type="GO" id="GO:0015386">
    <property type="term" value="F:potassium:proton antiporter activity"/>
    <property type="evidence" value="ECO:0007669"/>
    <property type="project" value="InterPro"/>
</dbReference>
<dbReference type="Gene3D" id="1.20.1530.20">
    <property type="match status" value="1"/>
</dbReference>
<dbReference type="InterPro" id="IPR006153">
    <property type="entry name" value="Cation/H_exchanger_TM"/>
</dbReference>
<dbReference type="InterPro" id="IPR045158">
    <property type="entry name" value="KEA4/5/6-like"/>
</dbReference>
<dbReference type="InterPro" id="IPR038770">
    <property type="entry name" value="Na+/solute_symporter_sf"/>
</dbReference>
<dbReference type="PANTHER" id="PTHR16254:SF29">
    <property type="entry name" value="K(+) EFFLUX ANTIPORTER 6"/>
    <property type="match status" value="1"/>
</dbReference>
<dbReference type="PANTHER" id="PTHR16254">
    <property type="entry name" value="POTASSIUM/PROTON ANTIPORTER-RELATED"/>
    <property type="match status" value="1"/>
</dbReference>
<dbReference type="Pfam" id="PF00999">
    <property type="entry name" value="Na_H_Exchanger"/>
    <property type="match status" value="1"/>
</dbReference>
<name>KEA6_ARATH</name>